<keyword id="KW-0010">Activator</keyword>
<keyword id="KW-0238">DNA-binding</keyword>
<keyword id="KW-1185">Reference proteome</keyword>
<keyword id="KW-0804">Transcription</keyword>
<keyword id="KW-0805">Transcription regulation</keyword>
<protein>
    <recommendedName>
        <fullName evidence="1">DNA-binding protein Fis</fullName>
    </recommendedName>
</protein>
<evidence type="ECO:0000255" key="1">
    <source>
        <dbReference type="HAMAP-Rule" id="MF_00166"/>
    </source>
</evidence>
<reference key="1">
    <citation type="journal article" date="2007" name="J. Bacteriol.">
        <title>The genome sequence of avian pathogenic Escherichia coli strain O1:K1:H7 shares strong similarities with human extraintestinal pathogenic E. coli genomes.</title>
        <authorList>
            <person name="Johnson T.J."/>
            <person name="Kariyawasam S."/>
            <person name="Wannemuehler Y."/>
            <person name="Mangiamele P."/>
            <person name="Johnson S.J."/>
            <person name="Doetkott C."/>
            <person name="Skyberg J.A."/>
            <person name="Lynne A.M."/>
            <person name="Johnson J.R."/>
            <person name="Nolan L.K."/>
        </authorList>
    </citation>
    <scope>NUCLEOTIDE SEQUENCE [LARGE SCALE GENOMIC DNA]</scope>
</reference>
<accession>A1AGG1</accession>
<feature type="chain" id="PRO_1000023323" description="DNA-binding protein Fis">
    <location>
        <begin position="1"/>
        <end position="98"/>
    </location>
</feature>
<feature type="DNA-binding region" description="H-T-H motif" evidence="1">
    <location>
        <begin position="74"/>
        <end position="93"/>
    </location>
</feature>
<organism>
    <name type="scientific">Escherichia coli O1:K1 / APEC</name>
    <dbReference type="NCBI Taxonomy" id="405955"/>
    <lineage>
        <taxon>Bacteria</taxon>
        <taxon>Pseudomonadati</taxon>
        <taxon>Pseudomonadota</taxon>
        <taxon>Gammaproteobacteria</taxon>
        <taxon>Enterobacterales</taxon>
        <taxon>Enterobacteriaceae</taxon>
        <taxon>Escherichia</taxon>
    </lineage>
</organism>
<dbReference type="EMBL" id="CP000468">
    <property type="protein sequence ID" value="ABJ02751.1"/>
    <property type="molecule type" value="Genomic_DNA"/>
</dbReference>
<dbReference type="RefSeq" id="WP_000462905.1">
    <property type="nucleotide sequence ID" value="NZ_CADILS010000003.1"/>
</dbReference>
<dbReference type="SMR" id="A1AGG1"/>
<dbReference type="GeneID" id="98390389"/>
<dbReference type="KEGG" id="ecv:APECO1_3177"/>
<dbReference type="HOGENOM" id="CLU_158040_3_0_6"/>
<dbReference type="Proteomes" id="UP000008216">
    <property type="component" value="Chromosome"/>
</dbReference>
<dbReference type="GO" id="GO:0003700">
    <property type="term" value="F:DNA-binding transcription factor activity"/>
    <property type="evidence" value="ECO:0007669"/>
    <property type="project" value="UniProtKB-UniRule"/>
</dbReference>
<dbReference type="GO" id="GO:0043565">
    <property type="term" value="F:sequence-specific DNA binding"/>
    <property type="evidence" value="ECO:0007669"/>
    <property type="project" value="InterPro"/>
</dbReference>
<dbReference type="FunFam" id="1.10.10.60:FF:000006">
    <property type="entry name" value="DNA-binding protein Fis"/>
    <property type="match status" value="1"/>
</dbReference>
<dbReference type="Gene3D" id="1.10.10.60">
    <property type="entry name" value="Homeodomain-like"/>
    <property type="match status" value="1"/>
</dbReference>
<dbReference type="HAMAP" id="MF_00166">
    <property type="entry name" value="DNA_binding_Fis"/>
    <property type="match status" value="1"/>
</dbReference>
<dbReference type="InterPro" id="IPR005412">
    <property type="entry name" value="Fis_DNA-bd"/>
</dbReference>
<dbReference type="InterPro" id="IPR009057">
    <property type="entry name" value="Homeodomain-like_sf"/>
</dbReference>
<dbReference type="InterPro" id="IPR002197">
    <property type="entry name" value="HTH_Fis"/>
</dbReference>
<dbReference type="InterPro" id="IPR050207">
    <property type="entry name" value="Trans_regulatory_Fis"/>
</dbReference>
<dbReference type="NCBIfam" id="NF001659">
    <property type="entry name" value="PRK00430.1"/>
    <property type="match status" value="1"/>
</dbReference>
<dbReference type="PANTHER" id="PTHR47918">
    <property type="entry name" value="DNA-BINDING PROTEIN FIS"/>
    <property type="match status" value="1"/>
</dbReference>
<dbReference type="PANTHER" id="PTHR47918:SF1">
    <property type="entry name" value="DNA-BINDING PROTEIN FIS"/>
    <property type="match status" value="1"/>
</dbReference>
<dbReference type="Pfam" id="PF02954">
    <property type="entry name" value="HTH_8"/>
    <property type="match status" value="1"/>
</dbReference>
<dbReference type="PIRSF" id="PIRSF002097">
    <property type="entry name" value="DNA-binding_Fis"/>
    <property type="match status" value="1"/>
</dbReference>
<dbReference type="PRINTS" id="PR01591">
    <property type="entry name" value="DNABINDNGFIS"/>
</dbReference>
<dbReference type="PRINTS" id="PR01590">
    <property type="entry name" value="HTHFIS"/>
</dbReference>
<dbReference type="SUPFAM" id="SSF46689">
    <property type="entry name" value="Homeodomain-like"/>
    <property type="match status" value="1"/>
</dbReference>
<gene>
    <name evidence="1" type="primary">fis</name>
    <name type="ordered locus">Ecok1_32570</name>
    <name type="ORF">APECO1_3177</name>
</gene>
<comment type="function">
    <text evidence="1">Activates ribosomal RNA transcription. Plays a direct role in upstream activation of rRNA promoters.</text>
</comment>
<comment type="subunit">
    <text evidence="1">Homodimer.</text>
</comment>
<comment type="similarity">
    <text evidence="1">Belongs to the transcriptional regulatory Fis family.</text>
</comment>
<proteinExistence type="inferred from homology"/>
<name>FIS_ECOK1</name>
<sequence length="98" mass="11240">MFEQRVNSDVLTVSTVNSQDQVTQKPLRDSVKQALKNYFAQLNGQDVNDLYELVLAEVEQPLLDMVMQYTRGNQTRAALMMGINRGTLRKKLKKYGMN</sequence>